<dbReference type="EC" id="5.1.1.3" evidence="1"/>
<dbReference type="EMBL" id="BA000016">
    <property type="protein sequence ID" value="BAB82274.1"/>
    <property type="molecule type" value="Genomic_DNA"/>
</dbReference>
<dbReference type="RefSeq" id="WP_011010969.1">
    <property type="nucleotide sequence ID" value="NC_003366.1"/>
</dbReference>
<dbReference type="SMR" id="Q8XHB7"/>
<dbReference type="STRING" id="195102.gene:10491902"/>
<dbReference type="KEGG" id="cpe:CPE2568"/>
<dbReference type="HOGENOM" id="CLU_052344_1_0_9"/>
<dbReference type="UniPathway" id="UPA00219"/>
<dbReference type="Proteomes" id="UP000000818">
    <property type="component" value="Chromosome"/>
</dbReference>
<dbReference type="GO" id="GO:0008881">
    <property type="term" value="F:glutamate racemase activity"/>
    <property type="evidence" value="ECO:0007669"/>
    <property type="project" value="UniProtKB-UniRule"/>
</dbReference>
<dbReference type="GO" id="GO:0071555">
    <property type="term" value="P:cell wall organization"/>
    <property type="evidence" value="ECO:0007669"/>
    <property type="project" value="UniProtKB-KW"/>
</dbReference>
<dbReference type="GO" id="GO:0009252">
    <property type="term" value="P:peptidoglycan biosynthetic process"/>
    <property type="evidence" value="ECO:0007669"/>
    <property type="project" value="UniProtKB-UniRule"/>
</dbReference>
<dbReference type="GO" id="GO:0008360">
    <property type="term" value="P:regulation of cell shape"/>
    <property type="evidence" value="ECO:0007669"/>
    <property type="project" value="UniProtKB-KW"/>
</dbReference>
<dbReference type="FunFam" id="3.40.50.1860:FF:000001">
    <property type="entry name" value="Glutamate racemase"/>
    <property type="match status" value="1"/>
</dbReference>
<dbReference type="Gene3D" id="3.40.50.1860">
    <property type="match status" value="2"/>
</dbReference>
<dbReference type="HAMAP" id="MF_00258">
    <property type="entry name" value="Glu_racemase"/>
    <property type="match status" value="1"/>
</dbReference>
<dbReference type="InterPro" id="IPR015942">
    <property type="entry name" value="Asp/Glu/hydantoin_racemase"/>
</dbReference>
<dbReference type="InterPro" id="IPR001920">
    <property type="entry name" value="Asp/Glu_race"/>
</dbReference>
<dbReference type="InterPro" id="IPR018187">
    <property type="entry name" value="Asp/Glu_racemase_AS_1"/>
</dbReference>
<dbReference type="InterPro" id="IPR033134">
    <property type="entry name" value="Asp/Glu_racemase_AS_2"/>
</dbReference>
<dbReference type="InterPro" id="IPR004391">
    <property type="entry name" value="Glu_race"/>
</dbReference>
<dbReference type="NCBIfam" id="TIGR00067">
    <property type="entry name" value="glut_race"/>
    <property type="match status" value="1"/>
</dbReference>
<dbReference type="PANTHER" id="PTHR21198">
    <property type="entry name" value="GLUTAMATE RACEMASE"/>
    <property type="match status" value="1"/>
</dbReference>
<dbReference type="PANTHER" id="PTHR21198:SF3">
    <property type="entry name" value="GLUTAMATE RACEMASE"/>
    <property type="match status" value="1"/>
</dbReference>
<dbReference type="Pfam" id="PF01177">
    <property type="entry name" value="Asp_Glu_race"/>
    <property type="match status" value="1"/>
</dbReference>
<dbReference type="SUPFAM" id="SSF53681">
    <property type="entry name" value="Aspartate/glutamate racemase"/>
    <property type="match status" value="2"/>
</dbReference>
<dbReference type="PROSITE" id="PS00923">
    <property type="entry name" value="ASP_GLU_RACEMASE_1"/>
    <property type="match status" value="1"/>
</dbReference>
<dbReference type="PROSITE" id="PS00924">
    <property type="entry name" value="ASP_GLU_RACEMASE_2"/>
    <property type="match status" value="1"/>
</dbReference>
<reference key="1">
    <citation type="journal article" date="2002" name="Proc. Natl. Acad. Sci. U.S.A.">
        <title>Complete genome sequence of Clostridium perfringens, an anaerobic flesh-eater.</title>
        <authorList>
            <person name="Shimizu T."/>
            <person name="Ohtani K."/>
            <person name="Hirakawa H."/>
            <person name="Ohshima K."/>
            <person name="Yamashita A."/>
            <person name="Shiba T."/>
            <person name="Ogasawara N."/>
            <person name="Hattori M."/>
            <person name="Kuhara S."/>
            <person name="Hayashi H."/>
        </authorList>
    </citation>
    <scope>NUCLEOTIDE SEQUENCE [LARGE SCALE GENOMIC DNA]</scope>
    <source>
        <strain>13 / Type A</strain>
    </source>
</reference>
<gene>
    <name evidence="1" type="primary">murI</name>
    <name type="ordered locus">CPE2568</name>
</gene>
<comment type="function">
    <text evidence="1">Provides the (R)-glutamate required for cell wall biosynthesis.</text>
</comment>
<comment type="catalytic activity">
    <reaction evidence="1">
        <text>L-glutamate = D-glutamate</text>
        <dbReference type="Rhea" id="RHEA:12813"/>
        <dbReference type="ChEBI" id="CHEBI:29985"/>
        <dbReference type="ChEBI" id="CHEBI:29986"/>
        <dbReference type="EC" id="5.1.1.3"/>
    </reaction>
</comment>
<comment type="pathway">
    <text evidence="1">Cell wall biogenesis; peptidoglycan biosynthesis.</text>
</comment>
<comment type="similarity">
    <text evidence="1">Belongs to the aspartate/glutamate racemases family.</text>
</comment>
<organism>
    <name type="scientific">Clostridium perfringens (strain 13 / Type A)</name>
    <dbReference type="NCBI Taxonomy" id="195102"/>
    <lineage>
        <taxon>Bacteria</taxon>
        <taxon>Bacillati</taxon>
        <taxon>Bacillota</taxon>
        <taxon>Clostridia</taxon>
        <taxon>Eubacteriales</taxon>
        <taxon>Clostridiaceae</taxon>
        <taxon>Clostridium</taxon>
    </lineage>
</organism>
<feature type="chain" id="PRO_0000095466" description="Glutamate racemase">
    <location>
        <begin position="1"/>
        <end position="260"/>
    </location>
</feature>
<feature type="active site" description="Proton donor/acceptor" evidence="1">
    <location>
        <position position="77"/>
    </location>
</feature>
<feature type="active site" description="Proton donor/acceptor" evidence="1">
    <location>
        <position position="188"/>
    </location>
</feature>
<feature type="binding site" evidence="1">
    <location>
        <begin position="14"/>
        <end position="15"/>
    </location>
    <ligand>
        <name>substrate</name>
    </ligand>
</feature>
<feature type="binding site" evidence="1">
    <location>
        <begin position="46"/>
        <end position="47"/>
    </location>
    <ligand>
        <name>substrate</name>
    </ligand>
</feature>
<feature type="binding site" evidence="1">
    <location>
        <begin position="78"/>
        <end position="79"/>
    </location>
    <ligand>
        <name>substrate</name>
    </ligand>
</feature>
<feature type="binding site" evidence="1">
    <location>
        <begin position="189"/>
        <end position="190"/>
    </location>
    <ligand>
        <name>substrate</name>
    </ligand>
</feature>
<name>MURI_CLOPE</name>
<protein>
    <recommendedName>
        <fullName evidence="1">Glutamate racemase</fullName>
        <ecNumber evidence="1">5.1.1.3</ecNumber>
    </recommendedName>
</protein>
<proteinExistence type="inferred from homology"/>
<evidence type="ECO:0000255" key="1">
    <source>
        <dbReference type="HAMAP-Rule" id="MF_00258"/>
    </source>
</evidence>
<sequence length="260" mass="29178">MQDDLKNAPIGFFDSGLGGLSVLRKALEMMPNENYIYYGDSKHAPYGEKTPQEIRSLSFNAIEFLIKKGAKAIVIACNTATSAAAHDLREYYKDIPIIGIEPALKPAIKLHETGSVIVMATKATLTQEKFKNLMDKYGEHREVIPLPCPGLVEFIEAGDLEGEDVKNFLREKLNPYMDREISSIVLGCTHYPFVKDVIQDLVGEKVDIIDGSSGTIRELKRRLEENNMESESKKKGNLDIFNSLEDKKILELSKKLIEIK</sequence>
<accession>Q8XHB7</accession>
<keyword id="KW-0133">Cell shape</keyword>
<keyword id="KW-0961">Cell wall biogenesis/degradation</keyword>
<keyword id="KW-0413">Isomerase</keyword>
<keyword id="KW-0573">Peptidoglycan synthesis</keyword>
<keyword id="KW-1185">Reference proteome</keyword>